<feature type="chain" id="PRO_0000281944" description="F-box/FBD/LRR-repeat protein At3g14710">
    <location>
        <begin position="1"/>
        <end position="442"/>
    </location>
</feature>
<feature type="domain" description="F-box">
    <location>
        <begin position="26"/>
        <end position="73"/>
    </location>
</feature>
<feature type="repeat" description="LRR 1">
    <location>
        <begin position="126"/>
        <end position="147"/>
    </location>
</feature>
<feature type="repeat" description="LRR 2">
    <location>
        <begin position="151"/>
        <end position="172"/>
    </location>
</feature>
<feature type="repeat" description="LRR 3">
    <location>
        <begin position="173"/>
        <end position="194"/>
    </location>
</feature>
<feature type="domain" description="FBD">
    <location>
        <begin position="370"/>
        <end position="414"/>
    </location>
</feature>
<sequence>MHPETEQACLVPSSKKTKLCSENFEDKFSSLLESVVSIILSQLPTAEAVSTSVLSKSWKNIWTNITDLHFDDTKQRDPSDSRFTDFVERVVGDIGSPHISSFYLCSVNTFDETLLFSWLSKVLKRNLQRLVVTCNDLEIISFSSLFPSFVSLVELRLRTKSILDISAPAILPNLKFLSLEDARIFNMSSVSKNLVLNFPVLETFEASYCRCFRTDTVIIDSPLLRIFEMFKCTSEHVPNPSQVCKIRVLASKLEKITFCGDEPRKIHLSFPPSLPDAYLALSRSEWPKTFLRSFTCVTSLALVLSKDFHVMAVPKFSQLVYLHLIYDMTQHFRLMQFLKSAPILEMLSIRDLTSPRSTPTAKSLKELRSVESPDCVTTMLKVLQIRNFKPNRLQISVLRYVLDNAEILGSVILSSPNPITEEEKARILAFPKASPHASVLFE</sequence>
<name>FDL43_ARATH</name>
<reference key="1">
    <citation type="journal article" date="2000" name="DNA Res.">
        <title>Structural analysis of Arabidopsis thaliana chromosome 3. I. Sequence features of the regions of 4,504,864 bp covered by sixty P1 and TAC clones.</title>
        <authorList>
            <person name="Sato S."/>
            <person name="Nakamura Y."/>
            <person name="Kaneko T."/>
            <person name="Katoh T."/>
            <person name="Asamizu E."/>
            <person name="Tabata S."/>
        </authorList>
    </citation>
    <scope>NUCLEOTIDE SEQUENCE [LARGE SCALE GENOMIC DNA]</scope>
    <source>
        <strain>cv. Columbia</strain>
    </source>
</reference>
<reference key="2">
    <citation type="journal article" date="2017" name="Plant J.">
        <title>Araport11: a complete reannotation of the Arabidopsis thaliana reference genome.</title>
        <authorList>
            <person name="Cheng C.Y."/>
            <person name="Krishnakumar V."/>
            <person name="Chan A.P."/>
            <person name="Thibaud-Nissen F."/>
            <person name="Schobel S."/>
            <person name="Town C.D."/>
        </authorList>
    </citation>
    <scope>GENOME REANNOTATION</scope>
    <source>
        <strain>cv. Columbia</strain>
    </source>
</reference>
<reference key="3">
    <citation type="submission" date="2004-11" db="EMBL/GenBank/DDBJ databases">
        <title>Arabidopsis ORF clones.</title>
        <authorList>
            <person name="Kim C.J."/>
            <person name="Chen H."/>
            <person name="Cheuk R.F."/>
            <person name="Shinn P."/>
            <person name="Ecker J.R."/>
        </authorList>
    </citation>
    <scope>NUCLEOTIDE SEQUENCE [LARGE SCALE MRNA]</scope>
    <source>
        <strain>cv. Columbia</strain>
    </source>
</reference>
<proteinExistence type="evidence at transcript level"/>
<organism>
    <name type="scientific">Arabidopsis thaliana</name>
    <name type="common">Mouse-ear cress</name>
    <dbReference type="NCBI Taxonomy" id="3702"/>
    <lineage>
        <taxon>Eukaryota</taxon>
        <taxon>Viridiplantae</taxon>
        <taxon>Streptophyta</taxon>
        <taxon>Embryophyta</taxon>
        <taxon>Tracheophyta</taxon>
        <taxon>Spermatophyta</taxon>
        <taxon>Magnoliopsida</taxon>
        <taxon>eudicotyledons</taxon>
        <taxon>Gunneridae</taxon>
        <taxon>Pentapetalae</taxon>
        <taxon>rosids</taxon>
        <taxon>malvids</taxon>
        <taxon>Brassicales</taxon>
        <taxon>Brassicaceae</taxon>
        <taxon>Camelineae</taxon>
        <taxon>Arabidopsis</taxon>
    </lineage>
</organism>
<accession>Q9LUC4</accession>
<dbReference type="EMBL" id="AB023038">
    <property type="protein sequence ID" value="BAB02402.1"/>
    <property type="molecule type" value="Genomic_DNA"/>
</dbReference>
<dbReference type="EMBL" id="CP002686">
    <property type="protein sequence ID" value="AEE75558.1"/>
    <property type="molecule type" value="Genomic_DNA"/>
</dbReference>
<dbReference type="EMBL" id="BT015055">
    <property type="protein sequence ID" value="AAT71927.1"/>
    <property type="molecule type" value="mRNA"/>
</dbReference>
<dbReference type="EMBL" id="BT020252">
    <property type="protein sequence ID" value="AAV74246.1"/>
    <property type="molecule type" value="mRNA"/>
</dbReference>
<dbReference type="RefSeq" id="NP_188089.1">
    <property type="nucleotide sequence ID" value="NM_112332.2"/>
</dbReference>
<dbReference type="BioGRID" id="6033">
    <property type="interactions" value="1"/>
</dbReference>
<dbReference type="IntAct" id="Q9LUC4">
    <property type="interactions" value="1"/>
</dbReference>
<dbReference type="STRING" id="3702.Q9LUC4"/>
<dbReference type="PaxDb" id="3702-AT3G14710.1"/>
<dbReference type="EnsemblPlants" id="AT3G14710.1">
    <property type="protein sequence ID" value="AT3G14710.1"/>
    <property type="gene ID" value="AT3G14710"/>
</dbReference>
<dbReference type="GeneID" id="820699"/>
<dbReference type="Gramene" id="AT3G14710.1">
    <property type="protein sequence ID" value="AT3G14710.1"/>
    <property type="gene ID" value="AT3G14710"/>
</dbReference>
<dbReference type="KEGG" id="ath:AT3G14710"/>
<dbReference type="Araport" id="AT3G14710"/>
<dbReference type="TAIR" id="AT3G14710"/>
<dbReference type="eggNOG" id="ENOG502RYTW">
    <property type="taxonomic scope" value="Eukaryota"/>
</dbReference>
<dbReference type="HOGENOM" id="CLU_010721_1_2_1"/>
<dbReference type="InParanoid" id="Q9LUC4"/>
<dbReference type="OMA" id="MHARDIF"/>
<dbReference type="PhylomeDB" id="Q9LUC4"/>
<dbReference type="PRO" id="PR:Q9LUC4"/>
<dbReference type="Proteomes" id="UP000006548">
    <property type="component" value="Chromosome 3"/>
</dbReference>
<dbReference type="ExpressionAtlas" id="Q9LUC4">
    <property type="expression patterns" value="baseline and differential"/>
</dbReference>
<dbReference type="Gene3D" id="3.80.10.10">
    <property type="entry name" value="Ribonuclease Inhibitor"/>
    <property type="match status" value="1"/>
</dbReference>
<dbReference type="InterPro" id="IPR036047">
    <property type="entry name" value="F-box-like_dom_sf"/>
</dbReference>
<dbReference type="InterPro" id="IPR001810">
    <property type="entry name" value="F-box_dom"/>
</dbReference>
<dbReference type="InterPro" id="IPR006566">
    <property type="entry name" value="FBD"/>
</dbReference>
<dbReference type="InterPro" id="IPR050232">
    <property type="entry name" value="FBL13/AtMIF1-like"/>
</dbReference>
<dbReference type="InterPro" id="IPR032675">
    <property type="entry name" value="LRR_dom_sf"/>
</dbReference>
<dbReference type="PANTHER" id="PTHR31900">
    <property type="entry name" value="F-BOX/RNI SUPERFAMILY PROTEIN-RELATED"/>
    <property type="match status" value="1"/>
</dbReference>
<dbReference type="PANTHER" id="PTHR31900:SF30">
    <property type="entry name" value="SUPERFAMILY PROTEIN, PUTATIVE-RELATED"/>
    <property type="match status" value="1"/>
</dbReference>
<dbReference type="Pfam" id="PF00646">
    <property type="entry name" value="F-box"/>
    <property type="match status" value="1"/>
</dbReference>
<dbReference type="Pfam" id="PF08387">
    <property type="entry name" value="FBD"/>
    <property type="match status" value="1"/>
</dbReference>
<dbReference type="SMART" id="SM00579">
    <property type="entry name" value="FBD"/>
    <property type="match status" value="1"/>
</dbReference>
<dbReference type="SUPFAM" id="SSF81383">
    <property type="entry name" value="F-box domain"/>
    <property type="match status" value="1"/>
</dbReference>
<dbReference type="SUPFAM" id="SSF52047">
    <property type="entry name" value="RNI-like"/>
    <property type="match status" value="1"/>
</dbReference>
<gene>
    <name type="ordered locus">At3g14710</name>
    <name type="ORF">MIE1.21</name>
</gene>
<protein>
    <recommendedName>
        <fullName>F-box/FBD/LRR-repeat protein At3g14710</fullName>
    </recommendedName>
</protein>
<keyword id="KW-0433">Leucine-rich repeat</keyword>
<keyword id="KW-1185">Reference proteome</keyword>
<keyword id="KW-0677">Repeat</keyword>